<keyword id="KW-0249">Electron transport</keyword>
<keyword id="KW-0285">Flavoprotein</keyword>
<keyword id="KW-0288">FMN</keyword>
<keyword id="KW-1185">Reference proteome</keyword>
<keyword id="KW-0813">Transport</keyword>
<organism>
    <name type="scientific">Escherichia coli O157:H7</name>
    <dbReference type="NCBI Taxonomy" id="83334"/>
    <lineage>
        <taxon>Bacteria</taxon>
        <taxon>Pseudomonadati</taxon>
        <taxon>Pseudomonadota</taxon>
        <taxon>Gammaproteobacteria</taxon>
        <taxon>Enterobacterales</taxon>
        <taxon>Enterobacteriaceae</taxon>
        <taxon>Escherichia</taxon>
    </lineage>
</organism>
<accession>P0ABY6</accession>
<accession>P41050</accession>
<protein>
    <recommendedName>
        <fullName>Flavodoxin 2</fullName>
    </recommendedName>
</protein>
<reference key="1">
    <citation type="journal article" date="2001" name="Nature">
        <title>Genome sequence of enterohaemorrhagic Escherichia coli O157:H7.</title>
        <authorList>
            <person name="Perna N.T."/>
            <person name="Plunkett G. III"/>
            <person name="Burland V."/>
            <person name="Mau B."/>
            <person name="Glasner J.D."/>
            <person name="Rose D.J."/>
            <person name="Mayhew G.F."/>
            <person name="Evans P.S."/>
            <person name="Gregor J."/>
            <person name="Kirkpatrick H.A."/>
            <person name="Posfai G."/>
            <person name="Hackett J."/>
            <person name="Klink S."/>
            <person name="Boutin A."/>
            <person name="Shao Y."/>
            <person name="Miller L."/>
            <person name="Grotbeck E.J."/>
            <person name="Davis N.W."/>
            <person name="Lim A."/>
            <person name="Dimalanta E.T."/>
            <person name="Potamousis K."/>
            <person name="Apodaca J."/>
            <person name="Anantharaman T.S."/>
            <person name="Lin J."/>
            <person name="Yen G."/>
            <person name="Schwartz D.C."/>
            <person name="Welch R.A."/>
            <person name="Blattner F.R."/>
        </authorList>
    </citation>
    <scope>NUCLEOTIDE SEQUENCE [LARGE SCALE GENOMIC DNA]</scope>
    <source>
        <strain>O157:H7 / EDL933 / ATCC 700927 / EHEC</strain>
    </source>
</reference>
<reference key="2">
    <citation type="journal article" date="2001" name="DNA Res.">
        <title>Complete genome sequence of enterohemorrhagic Escherichia coli O157:H7 and genomic comparison with a laboratory strain K-12.</title>
        <authorList>
            <person name="Hayashi T."/>
            <person name="Makino K."/>
            <person name="Ohnishi M."/>
            <person name="Kurokawa K."/>
            <person name="Ishii K."/>
            <person name="Yokoyama K."/>
            <person name="Han C.-G."/>
            <person name="Ohtsubo E."/>
            <person name="Nakayama K."/>
            <person name="Murata T."/>
            <person name="Tanaka M."/>
            <person name="Tobe T."/>
            <person name="Iida T."/>
            <person name="Takami H."/>
            <person name="Honda T."/>
            <person name="Sasakawa C."/>
            <person name="Ogasawara N."/>
            <person name="Yasunaga T."/>
            <person name="Kuhara S."/>
            <person name="Shiba T."/>
            <person name="Hattori M."/>
            <person name="Shinagawa H."/>
        </authorList>
    </citation>
    <scope>NUCLEOTIDE SEQUENCE [LARGE SCALE GENOMIC DNA]</scope>
    <source>
        <strain>O157:H7 / Sakai / RIMD 0509952 / EHEC</strain>
    </source>
</reference>
<sequence length="173" mass="19700">MNMGLFYGSSTCYTEMAAEKIRDIIGPELVTLHNLKDDSPKLMEQYDVLILGIPTWDFGEIQEDWEAVWDQLDDLNLEGKIVALYGLGDQLGYGEWFLDALGMLHDKLSTKGVKFVGYWPTEGYEFTSPKPVIADGQLFVGLALDETNQYDLSDERIQSWCEQILNEMAEHYA</sequence>
<feature type="chain" id="PRO_0000171627" description="Flavodoxin 2">
    <location>
        <begin position="1"/>
        <end position="173"/>
    </location>
</feature>
<feature type="domain" description="Flavodoxin-like" evidence="2">
    <location>
        <begin position="3"/>
        <end position="165"/>
    </location>
</feature>
<proteinExistence type="inferred from homology"/>
<comment type="function">
    <text evidence="3">Low-potential electron donor to a number of redox enzymes.</text>
</comment>
<comment type="cofactor">
    <cofactor evidence="1">
        <name>FMN</name>
        <dbReference type="ChEBI" id="CHEBI:58210"/>
    </cofactor>
</comment>
<comment type="similarity">
    <text evidence="3">Belongs to the flavodoxin family.</text>
</comment>
<dbReference type="EMBL" id="AE005174">
    <property type="protein sequence ID" value="AAG58023.1"/>
    <property type="molecule type" value="Genomic_DNA"/>
</dbReference>
<dbReference type="EMBL" id="BA000007">
    <property type="protein sequence ID" value="BAB37190.1"/>
    <property type="molecule type" value="Genomic_DNA"/>
</dbReference>
<dbReference type="PIR" id="C85945">
    <property type="entry name" value="C85945"/>
</dbReference>
<dbReference type="PIR" id="G91099">
    <property type="entry name" value="G91099"/>
</dbReference>
<dbReference type="RefSeq" id="NP_311794.1">
    <property type="nucleotide sequence ID" value="NC_002695.1"/>
</dbReference>
<dbReference type="RefSeq" id="WP_001055874.1">
    <property type="nucleotide sequence ID" value="NZ_VOAI01000003.1"/>
</dbReference>
<dbReference type="SMR" id="P0ABY6"/>
<dbReference type="STRING" id="155864.Z4233"/>
<dbReference type="GeneID" id="913012"/>
<dbReference type="GeneID" id="93779107"/>
<dbReference type="KEGG" id="ece:Z4233"/>
<dbReference type="KEGG" id="ecs:ECs_3767"/>
<dbReference type="PATRIC" id="fig|386585.9.peg.3931"/>
<dbReference type="eggNOG" id="COG0716">
    <property type="taxonomic scope" value="Bacteria"/>
</dbReference>
<dbReference type="HOGENOM" id="CLU_051402_1_0_6"/>
<dbReference type="OMA" id="ILGISTW"/>
<dbReference type="Proteomes" id="UP000000558">
    <property type="component" value="Chromosome"/>
</dbReference>
<dbReference type="Proteomes" id="UP000002519">
    <property type="component" value="Chromosome"/>
</dbReference>
<dbReference type="GO" id="GO:0009055">
    <property type="term" value="F:electron transfer activity"/>
    <property type="evidence" value="ECO:0007669"/>
    <property type="project" value="InterPro"/>
</dbReference>
<dbReference type="GO" id="GO:0010181">
    <property type="term" value="F:FMN binding"/>
    <property type="evidence" value="ECO:0007669"/>
    <property type="project" value="InterPro"/>
</dbReference>
<dbReference type="FunFam" id="3.40.50.360:FF:000006">
    <property type="entry name" value="Flavodoxin"/>
    <property type="match status" value="1"/>
</dbReference>
<dbReference type="Gene3D" id="3.40.50.360">
    <property type="match status" value="1"/>
</dbReference>
<dbReference type="InterPro" id="IPR050619">
    <property type="entry name" value="Flavodoxin"/>
</dbReference>
<dbReference type="InterPro" id="IPR008254">
    <property type="entry name" value="Flavodoxin/NO_synth"/>
</dbReference>
<dbReference type="InterPro" id="IPR001226">
    <property type="entry name" value="Flavodoxin_CS"/>
</dbReference>
<dbReference type="InterPro" id="IPR010086">
    <property type="entry name" value="Flavodoxin_lc"/>
</dbReference>
<dbReference type="InterPro" id="IPR029039">
    <property type="entry name" value="Flavoprotein-like_sf"/>
</dbReference>
<dbReference type="NCBIfam" id="TIGR01752">
    <property type="entry name" value="flav_long"/>
    <property type="match status" value="1"/>
</dbReference>
<dbReference type="NCBIfam" id="NF009023">
    <property type="entry name" value="PRK12359.1"/>
    <property type="match status" value="1"/>
</dbReference>
<dbReference type="PANTHER" id="PTHR42809">
    <property type="entry name" value="FLAVODOXIN 2"/>
    <property type="match status" value="1"/>
</dbReference>
<dbReference type="PANTHER" id="PTHR42809:SF3">
    <property type="entry name" value="FLAVODOXIN 2"/>
    <property type="match status" value="1"/>
</dbReference>
<dbReference type="Pfam" id="PF00258">
    <property type="entry name" value="Flavodoxin_1"/>
    <property type="match status" value="1"/>
</dbReference>
<dbReference type="PIRSF" id="PIRSF038996">
    <property type="entry name" value="FldA"/>
    <property type="match status" value="1"/>
</dbReference>
<dbReference type="SUPFAM" id="SSF52218">
    <property type="entry name" value="Flavoproteins"/>
    <property type="match status" value="1"/>
</dbReference>
<dbReference type="PROSITE" id="PS00201">
    <property type="entry name" value="FLAVODOXIN"/>
    <property type="match status" value="1"/>
</dbReference>
<dbReference type="PROSITE" id="PS50902">
    <property type="entry name" value="FLAVODOXIN_LIKE"/>
    <property type="match status" value="1"/>
</dbReference>
<gene>
    <name type="primary">fldB</name>
    <name type="ordered locus">Z4233</name>
    <name type="ordered locus">ECs3767</name>
</gene>
<evidence type="ECO:0000250" key="1"/>
<evidence type="ECO:0000255" key="2">
    <source>
        <dbReference type="PROSITE-ProRule" id="PRU00088"/>
    </source>
</evidence>
<evidence type="ECO:0000305" key="3"/>
<name>FLAW_ECO57</name>